<protein>
    <recommendedName>
        <fullName>Sensor protein EvgS</fullName>
        <ecNumber>2.7.13.3</ecNumber>
    </recommendedName>
</protein>
<evidence type="ECO:0000255" key="1"/>
<evidence type="ECO:0000255" key="2">
    <source>
        <dbReference type="PROSITE-ProRule" id="PRU00107"/>
    </source>
</evidence>
<evidence type="ECO:0000255" key="3">
    <source>
        <dbReference type="PROSITE-ProRule" id="PRU00110"/>
    </source>
</evidence>
<evidence type="ECO:0000255" key="4">
    <source>
        <dbReference type="PROSITE-ProRule" id="PRU00169"/>
    </source>
</evidence>
<evidence type="ECO:0000305" key="5"/>
<feature type="signal peptide" evidence="1">
    <location>
        <begin position="1"/>
        <end position="21"/>
    </location>
</feature>
<feature type="chain" id="PRO_0000032371" description="Sensor protein EvgS">
    <location>
        <begin position="22"/>
        <end position="1197"/>
    </location>
</feature>
<feature type="topological domain" description="Cytoplasmic" evidence="1">
    <location>
        <begin position="22"/>
        <end position="325"/>
    </location>
</feature>
<feature type="transmembrane region" description="Helical" evidence="1">
    <location>
        <begin position="326"/>
        <end position="346"/>
    </location>
</feature>
<feature type="topological domain" description="Periplasmic" evidence="1">
    <location>
        <begin position="347"/>
        <end position="537"/>
    </location>
</feature>
<feature type="transmembrane region" description="Helical" evidence="1">
    <location>
        <begin position="538"/>
        <end position="558"/>
    </location>
</feature>
<feature type="topological domain" description="Cytoplasmic" evidence="1">
    <location>
        <begin position="559"/>
        <end position="1197"/>
    </location>
</feature>
<feature type="domain" description="Histidine kinase" evidence="2">
    <location>
        <begin position="718"/>
        <end position="938"/>
    </location>
</feature>
<feature type="domain" description="Response regulatory" evidence="4">
    <location>
        <begin position="960"/>
        <end position="1074"/>
    </location>
</feature>
<feature type="domain" description="HPt" evidence="3">
    <location>
        <begin position="1098"/>
        <end position="1197"/>
    </location>
</feature>
<feature type="modified residue" description="Phosphohistidine; by autocatalysis" evidence="2">
    <location>
        <position position="721"/>
    </location>
</feature>
<feature type="modified residue" description="4-aspartylphosphate" evidence="4">
    <location>
        <position position="1009"/>
    </location>
</feature>
<feature type="modified residue" description="Phosphohistidine" evidence="3">
    <location>
        <position position="1137"/>
    </location>
</feature>
<feature type="sequence variant" description="In EvgS1; constitutively active.">
    <original>F</original>
    <variation>S</variation>
    <location>
        <position position="577"/>
    </location>
</feature>
<feature type="sequence variant" description="In EvgS4; constitutively active.">
    <original>E</original>
    <variation>G</variation>
    <location>
        <position position="701"/>
    </location>
</feature>
<feature type="sequence conflict" description="In Ref. 1 and 2." evidence="5" ref="1 2">
    <original>L</original>
    <variation>F</variation>
    <location>
        <position position="152"/>
    </location>
</feature>
<feature type="sequence conflict" description="In Ref. 1 and 2." evidence="5" ref="1 2">
    <original>FF</original>
    <variation>PL</variation>
    <location>
        <begin position="242"/>
        <end position="243"/>
    </location>
</feature>
<feature type="sequence conflict" description="In Ref. 1 and 2." evidence="5" ref="1 2">
    <original>W</original>
    <variation>R</variation>
    <location>
        <position position="275"/>
    </location>
</feature>
<feature type="sequence conflict" description="In Ref. 1 and 2." evidence="5" ref="1 2">
    <original>SQ</original>
    <variation>FE</variation>
    <location>
        <begin position="420"/>
        <end position="421"/>
    </location>
</feature>
<feature type="sequence conflict" description="In Ref. 1 and 2." evidence="5" ref="1 2">
    <original>G</original>
    <variation>D</variation>
    <location>
        <position position="739"/>
    </location>
</feature>
<feature type="sequence conflict" description="In Ref. 1 and 2." evidence="5" ref="1 2">
    <original>G</original>
    <variation>K</variation>
    <location>
        <position position="758"/>
    </location>
</feature>
<feature type="sequence conflict" description="In Ref. 1 and 2." evidence="5" ref="1 2">
    <original>L</original>
    <variation>V</variation>
    <location>
        <position position="761"/>
    </location>
</feature>
<feature type="sequence conflict" description="In Ref. 1 and 2." evidence="5" ref="1 2">
    <original>S</original>
    <variation>L</variation>
    <location>
        <position position="877"/>
    </location>
</feature>
<feature type="sequence conflict" description="In Ref. 1 and 2." evidence="5" ref="1 2">
    <original>R</original>
    <variation>H</variation>
    <location>
        <position position="1045"/>
    </location>
</feature>
<feature type="sequence conflict" description="In Ref. 1 and 2." evidence="5" ref="1 2">
    <original>H</original>
    <variation>Y</variation>
    <location>
        <position position="1074"/>
    </location>
</feature>
<accession>P30855</accession>
<accession>P77644</accession>
<accession>Q9RF36</accession>
<accession>Q9RF37</accession>
<reference key="1">
    <citation type="journal article" date="1994" name="Gene">
        <title>Newly identified genes involved in the signal transduction of Escherichia coli K-12.</title>
        <authorList>
            <person name="Utsumi R."/>
            <person name="Katayama S."/>
            <person name="Taniguchi M."/>
            <person name="Horie T."/>
            <person name="Ikeda M."/>
            <person name="Igaki S."/>
            <person name="Nakagawa H."/>
            <person name="Miwa A."/>
            <person name="Tanabe H."/>
            <person name="Noda M."/>
        </authorList>
    </citation>
    <scope>NUCLEOTIDE SEQUENCE [GENOMIC DNA]</scope>
    <source>
        <strain>K12</strain>
    </source>
</reference>
<reference key="2">
    <citation type="journal article" date="1992" name="Nucleic Acids Symp. Ser.">
        <title>Cloning and sequence analysis of the evgAS genes involved in signal transduction of Escherichia coli K-12.</title>
        <authorList>
            <person name="Utsumi R."/>
            <person name="Katayama S."/>
            <person name="Ikeda M."/>
            <person name="Igaki S."/>
            <person name="Nakagawa H."/>
            <person name="Miwa A."/>
            <person name="Taniguchi M."/>
            <person name="Noda M."/>
        </authorList>
    </citation>
    <scope>NUCLEOTIDE SEQUENCE [GENOMIC DNA]</scope>
    <source>
        <strain>K12</strain>
    </source>
</reference>
<reference key="3">
    <citation type="journal article" date="2000" name="Biosci. Biotechnol. Biochem.">
        <title>Transcription of emrKY is regulated by the EvgA-EvgS two-component system in Escherichia coli K-12.</title>
        <authorList>
            <person name="Kato A."/>
            <person name="Ohnishi H."/>
            <person name="Yamamoto K."/>
            <person name="Furuta E."/>
            <person name="Tanabe H."/>
            <person name="Utsumi R."/>
        </authorList>
    </citation>
    <scope>NUCLEOTIDE SEQUENCE [GENOMIC DNA] (VARIANTS EVGS1 AND EVGS4)</scope>
    <source>
        <strain>K12</strain>
    </source>
</reference>
<reference key="4">
    <citation type="journal article" date="1997" name="DNA Res.">
        <title>Construction of a contiguous 874-kb sequence of the Escherichia coli-K12 genome corresponding to 50.0-68.8 min on the linkage map and analysis of its sequence features.</title>
        <authorList>
            <person name="Yamamoto Y."/>
            <person name="Aiba H."/>
            <person name="Baba T."/>
            <person name="Hayashi K."/>
            <person name="Inada T."/>
            <person name="Isono K."/>
            <person name="Itoh T."/>
            <person name="Kimura S."/>
            <person name="Kitagawa M."/>
            <person name="Makino K."/>
            <person name="Miki T."/>
            <person name="Mitsuhashi N."/>
            <person name="Mizobuchi K."/>
            <person name="Mori H."/>
            <person name="Nakade S."/>
            <person name="Nakamura Y."/>
            <person name="Nashimoto H."/>
            <person name="Oshima T."/>
            <person name="Oyama S."/>
            <person name="Saito N."/>
            <person name="Sampei G."/>
            <person name="Satoh Y."/>
            <person name="Sivasundaram S."/>
            <person name="Tagami H."/>
            <person name="Takahashi H."/>
            <person name="Takeda J."/>
            <person name="Takemoto K."/>
            <person name="Uehara K."/>
            <person name="Wada C."/>
            <person name="Yamagata S."/>
            <person name="Horiuchi T."/>
        </authorList>
    </citation>
    <scope>NUCLEOTIDE SEQUENCE [LARGE SCALE GENOMIC DNA]</scope>
    <source>
        <strain>K12 / W3110 / ATCC 27325 / DSM 5911</strain>
    </source>
</reference>
<reference key="5">
    <citation type="journal article" date="1997" name="Science">
        <title>The complete genome sequence of Escherichia coli K-12.</title>
        <authorList>
            <person name="Blattner F.R."/>
            <person name="Plunkett G. III"/>
            <person name="Bloch C.A."/>
            <person name="Perna N.T."/>
            <person name="Burland V."/>
            <person name="Riley M."/>
            <person name="Collado-Vides J."/>
            <person name="Glasner J.D."/>
            <person name="Rode C.K."/>
            <person name="Mayhew G.F."/>
            <person name="Gregor J."/>
            <person name="Davis N.W."/>
            <person name="Kirkpatrick H.A."/>
            <person name="Goeden M.A."/>
            <person name="Rose D.J."/>
            <person name="Mau B."/>
            <person name="Shao Y."/>
        </authorList>
    </citation>
    <scope>NUCLEOTIDE SEQUENCE [LARGE SCALE GENOMIC DNA]</scope>
    <source>
        <strain>K12 / MG1655 / ATCC 47076</strain>
    </source>
</reference>
<reference key="6">
    <citation type="journal article" date="2006" name="Mol. Syst. Biol.">
        <title>Highly accurate genome sequences of Escherichia coli K-12 strains MG1655 and W3110.</title>
        <authorList>
            <person name="Hayashi K."/>
            <person name="Morooka N."/>
            <person name="Yamamoto Y."/>
            <person name="Fujita K."/>
            <person name="Isono K."/>
            <person name="Choi S."/>
            <person name="Ohtsubo E."/>
            <person name="Baba T."/>
            <person name="Wanner B.L."/>
            <person name="Mori H."/>
            <person name="Horiuchi T."/>
        </authorList>
    </citation>
    <scope>NUCLEOTIDE SEQUENCE [LARGE SCALE GENOMIC DNA]</scope>
    <source>
        <strain>K12 / W3110 / ATCC 27325 / DSM 5911</strain>
    </source>
</reference>
<reference key="7">
    <citation type="journal article" date="1998" name="Mol. Microbiol.">
        <title>Specificity of the BvgAS and EvgAS phosphorelay is mediated by the C-terminal HPt domains of the sensor proteins.</title>
        <authorList>
            <person name="Perraud A.-L."/>
            <person name="Kimmel B."/>
            <person name="Weiss V."/>
            <person name="Gross R."/>
        </authorList>
    </citation>
    <scope>CHARACTERIZATION</scope>
</reference>
<proteinExistence type="evidence at protein level"/>
<keyword id="KW-0067">ATP-binding</keyword>
<keyword id="KW-0997">Cell inner membrane</keyword>
<keyword id="KW-1003">Cell membrane</keyword>
<keyword id="KW-0418">Kinase</keyword>
<keyword id="KW-0472">Membrane</keyword>
<keyword id="KW-0547">Nucleotide-binding</keyword>
<keyword id="KW-0597">Phosphoprotein</keyword>
<keyword id="KW-1185">Reference proteome</keyword>
<keyword id="KW-0732">Signal</keyword>
<keyword id="KW-0808">Transferase</keyword>
<keyword id="KW-0812">Transmembrane</keyword>
<keyword id="KW-1133">Transmembrane helix</keyword>
<keyword id="KW-0902">Two-component regulatory system</keyword>
<comment type="function">
    <text>Member of the two-component regulatory system EvgS/EvgA. Phosphorylates EvgA via a four-step phosphorelay in response to environmental signals.</text>
</comment>
<comment type="catalytic activity">
    <reaction>
        <text>ATP + protein L-histidine = ADP + protein N-phospho-L-histidine.</text>
        <dbReference type="EC" id="2.7.13.3"/>
    </reaction>
</comment>
<comment type="subcellular location">
    <subcellularLocation>
        <location evidence="5">Cell inner membrane</location>
        <topology evidence="5">Multi-pass membrane protein</topology>
    </subcellularLocation>
</comment>
<comment type="PTM">
    <text>Activation requires a sequential transfer of a phosphate group from a His in the primary transmitter domain, to an Asp in the receiver domain and to a His in the secondary transmitter domain.</text>
</comment>
<gene>
    <name type="primary">evgS</name>
    <name type="ordered locus">b2370</name>
    <name type="ordered locus">JW2367</name>
</gene>
<organism>
    <name type="scientific">Escherichia coli (strain K12)</name>
    <dbReference type="NCBI Taxonomy" id="83333"/>
    <lineage>
        <taxon>Bacteria</taxon>
        <taxon>Pseudomonadati</taxon>
        <taxon>Pseudomonadota</taxon>
        <taxon>Gammaproteobacteria</taxon>
        <taxon>Enterobacterales</taxon>
        <taxon>Enterobacteriaceae</taxon>
        <taxon>Escherichia</taxon>
    </lineage>
</organism>
<dbReference type="EC" id="2.7.13.3"/>
<dbReference type="EMBL" id="D14008">
    <property type="protein sequence ID" value="BAA03108.1"/>
    <property type="molecule type" value="Genomic_DNA"/>
</dbReference>
<dbReference type="EMBL" id="AF201840">
    <property type="protein sequence ID" value="AAF17563.1"/>
    <property type="molecule type" value="Genomic_DNA"/>
</dbReference>
<dbReference type="EMBL" id="AF201841">
    <property type="protein sequence ID" value="AAF17564.1"/>
    <property type="molecule type" value="Genomic_DNA"/>
</dbReference>
<dbReference type="EMBL" id="U00096">
    <property type="protein sequence ID" value="AAC75429.1"/>
    <property type="molecule type" value="Genomic_DNA"/>
</dbReference>
<dbReference type="EMBL" id="AP009048">
    <property type="protein sequence ID" value="BAA16241.1"/>
    <property type="molecule type" value="Genomic_DNA"/>
</dbReference>
<dbReference type="PIR" id="G65010">
    <property type="entry name" value="G65010"/>
</dbReference>
<dbReference type="RefSeq" id="NP_416871.1">
    <property type="nucleotide sequence ID" value="NC_000913.3"/>
</dbReference>
<dbReference type="RefSeq" id="WP_001326970.1">
    <property type="nucleotide sequence ID" value="NZ_LN832404.1"/>
</dbReference>
<dbReference type="SMR" id="P30855"/>
<dbReference type="BioGRID" id="4260559">
    <property type="interactions" value="17"/>
</dbReference>
<dbReference type="BioGRID" id="851185">
    <property type="interactions" value="1"/>
</dbReference>
<dbReference type="DIP" id="DIP-9545N"/>
<dbReference type="FunCoup" id="P30855">
    <property type="interactions" value="202"/>
</dbReference>
<dbReference type="IntAct" id="P30855">
    <property type="interactions" value="5"/>
</dbReference>
<dbReference type="STRING" id="511145.b2370"/>
<dbReference type="CARD" id="ARO:3000833">
    <property type="molecule name" value="evgS"/>
    <property type="mechanism identifier" value="ARO:0010000"/>
    <property type="mechanism name" value="antibiotic efflux"/>
</dbReference>
<dbReference type="jPOST" id="P30855"/>
<dbReference type="PaxDb" id="511145-b2370"/>
<dbReference type="EnsemblBacteria" id="AAC75429">
    <property type="protein sequence ID" value="AAC75429"/>
    <property type="gene ID" value="b2370"/>
</dbReference>
<dbReference type="GeneID" id="946844"/>
<dbReference type="KEGG" id="ecj:JW2367"/>
<dbReference type="KEGG" id="eco:b2370"/>
<dbReference type="PATRIC" id="fig|1411691.4.peg.4359"/>
<dbReference type="EchoBASE" id="EB1567"/>
<dbReference type="eggNOG" id="COG0784">
    <property type="taxonomic scope" value="Bacteria"/>
</dbReference>
<dbReference type="eggNOG" id="COG0834">
    <property type="taxonomic scope" value="Bacteria"/>
</dbReference>
<dbReference type="eggNOG" id="COG2198">
    <property type="taxonomic scope" value="Bacteria"/>
</dbReference>
<dbReference type="eggNOG" id="COG2205">
    <property type="taxonomic scope" value="Bacteria"/>
</dbReference>
<dbReference type="HOGENOM" id="CLU_000445_37_3_6"/>
<dbReference type="InParanoid" id="P30855"/>
<dbReference type="OMA" id="RPDYPPF"/>
<dbReference type="PhylomeDB" id="P30855"/>
<dbReference type="BioCyc" id="EcoCyc:EVGS-MONOMER"/>
<dbReference type="BioCyc" id="MetaCyc:EVGS-MONOMER"/>
<dbReference type="BRENDA" id="2.7.13.3">
    <property type="organism ID" value="2026"/>
</dbReference>
<dbReference type="PRO" id="PR:P30855"/>
<dbReference type="Proteomes" id="UP000000625">
    <property type="component" value="Chromosome"/>
</dbReference>
<dbReference type="GO" id="GO:0005829">
    <property type="term" value="C:cytosol"/>
    <property type="evidence" value="ECO:0000255"/>
    <property type="project" value="EcoCyc"/>
</dbReference>
<dbReference type="GO" id="GO:0030288">
    <property type="term" value="C:outer membrane-bounded periplasmic space"/>
    <property type="evidence" value="ECO:0000255"/>
    <property type="project" value="EcoCyc"/>
</dbReference>
<dbReference type="GO" id="GO:0005886">
    <property type="term" value="C:plasma membrane"/>
    <property type="evidence" value="ECO:0000255"/>
    <property type="project" value="EcoCyc"/>
</dbReference>
<dbReference type="GO" id="GO:0005524">
    <property type="term" value="F:ATP binding"/>
    <property type="evidence" value="ECO:0007669"/>
    <property type="project" value="UniProtKB-KW"/>
</dbReference>
<dbReference type="GO" id="GO:0000155">
    <property type="term" value="F:phosphorelay sensor kinase activity"/>
    <property type="evidence" value="ECO:0000314"/>
    <property type="project" value="EcoCyc"/>
</dbReference>
<dbReference type="GO" id="GO:0010447">
    <property type="term" value="P:response to acidic pH"/>
    <property type="evidence" value="ECO:0000314"/>
    <property type="project" value="EcoCyc"/>
</dbReference>
<dbReference type="GO" id="GO:0010038">
    <property type="term" value="P:response to metal ion"/>
    <property type="evidence" value="ECO:0000314"/>
    <property type="project" value="EcoCyc"/>
</dbReference>
<dbReference type="GO" id="GO:0007165">
    <property type="term" value="P:signal transduction"/>
    <property type="evidence" value="ECO:0000314"/>
    <property type="project" value="EcoCyc"/>
</dbReference>
<dbReference type="CDD" id="cd16922">
    <property type="entry name" value="HATPase_EvgS-ArcB-TorS-like"/>
    <property type="match status" value="1"/>
</dbReference>
<dbReference type="CDD" id="cd00082">
    <property type="entry name" value="HisKA"/>
    <property type="match status" value="1"/>
</dbReference>
<dbReference type="CDD" id="cd00088">
    <property type="entry name" value="HPT"/>
    <property type="match status" value="1"/>
</dbReference>
<dbReference type="CDD" id="cd13705">
    <property type="entry name" value="PBP2_BvgS_D1"/>
    <property type="match status" value="1"/>
</dbReference>
<dbReference type="CDD" id="cd13707">
    <property type="entry name" value="PBP2_BvgS_D2"/>
    <property type="match status" value="1"/>
</dbReference>
<dbReference type="CDD" id="cd17546">
    <property type="entry name" value="REC_hyHK_CKI1_RcsC-like"/>
    <property type="match status" value="1"/>
</dbReference>
<dbReference type="FunFam" id="3.40.50.2300:FF:000121">
    <property type="entry name" value="Sensor histidine kinase RcsC"/>
    <property type="match status" value="1"/>
</dbReference>
<dbReference type="FunFam" id="1.10.287.130:FF:000080">
    <property type="entry name" value="Sensor histidine kinase/response regulator EvgS"/>
    <property type="match status" value="1"/>
</dbReference>
<dbReference type="FunFam" id="3.30.565.10:FF:000091">
    <property type="entry name" value="Sensor histidine kinase/response regulator EvgS"/>
    <property type="match status" value="1"/>
</dbReference>
<dbReference type="Gene3D" id="1.10.287.130">
    <property type="match status" value="1"/>
</dbReference>
<dbReference type="Gene3D" id="3.40.50.2300">
    <property type="match status" value="1"/>
</dbReference>
<dbReference type="Gene3D" id="3.30.565.10">
    <property type="entry name" value="Histidine kinase-like ATPase, C-terminal domain"/>
    <property type="match status" value="1"/>
</dbReference>
<dbReference type="Gene3D" id="1.20.120.160">
    <property type="entry name" value="HPT domain"/>
    <property type="match status" value="1"/>
</dbReference>
<dbReference type="Gene3D" id="3.40.190.10">
    <property type="entry name" value="Periplasmic binding protein-like II"/>
    <property type="match status" value="4"/>
</dbReference>
<dbReference type="InterPro" id="IPR049870">
    <property type="entry name" value="BvgS-like_periplasmic1"/>
</dbReference>
<dbReference type="InterPro" id="IPR049871">
    <property type="entry name" value="BvgS-like_periplasmic2"/>
</dbReference>
<dbReference type="InterPro" id="IPR011006">
    <property type="entry name" value="CheY-like_superfamily"/>
</dbReference>
<dbReference type="InterPro" id="IPR036890">
    <property type="entry name" value="HATPase_C_sf"/>
</dbReference>
<dbReference type="InterPro" id="IPR005467">
    <property type="entry name" value="His_kinase_dom"/>
</dbReference>
<dbReference type="InterPro" id="IPR003661">
    <property type="entry name" value="HisK_dim/P_dom"/>
</dbReference>
<dbReference type="InterPro" id="IPR036097">
    <property type="entry name" value="HisK_dim/P_sf"/>
</dbReference>
<dbReference type="InterPro" id="IPR036641">
    <property type="entry name" value="HPT_dom_sf"/>
</dbReference>
<dbReference type="InterPro" id="IPR004358">
    <property type="entry name" value="Sig_transdc_His_kin-like_C"/>
</dbReference>
<dbReference type="InterPro" id="IPR008207">
    <property type="entry name" value="Sig_transdc_His_kin_Hpt_dom"/>
</dbReference>
<dbReference type="InterPro" id="IPR001789">
    <property type="entry name" value="Sig_transdc_resp-reg_receiver"/>
</dbReference>
<dbReference type="InterPro" id="IPR001638">
    <property type="entry name" value="Solute-binding_3/MltF_N"/>
</dbReference>
<dbReference type="NCBIfam" id="NF007420">
    <property type="entry name" value="PRK09959.1"/>
    <property type="match status" value="1"/>
</dbReference>
<dbReference type="PANTHER" id="PTHR43047:SF72">
    <property type="entry name" value="OSMOSENSING HISTIDINE PROTEIN KINASE SLN1"/>
    <property type="match status" value="1"/>
</dbReference>
<dbReference type="PANTHER" id="PTHR43047">
    <property type="entry name" value="TWO-COMPONENT HISTIDINE PROTEIN KINASE"/>
    <property type="match status" value="1"/>
</dbReference>
<dbReference type="Pfam" id="PF02518">
    <property type="entry name" value="HATPase_c"/>
    <property type="match status" value="1"/>
</dbReference>
<dbReference type="Pfam" id="PF00512">
    <property type="entry name" value="HisKA"/>
    <property type="match status" value="1"/>
</dbReference>
<dbReference type="Pfam" id="PF01627">
    <property type="entry name" value="Hpt"/>
    <property type="match status" value="1"/>
</dbReference>
<dbReference type="Pfam" id="PF00072">
    <property type="entry name" value="Response_reg"/>
    <property type="match status" value="1"/>
</dbReference>
<dbReference type="Pfam" id="PF00497">
    <property type="entry name" value="SBP_bac_3"/>
    <property type="match status" value="2"/>
</dbReference>
<dbReference type="PRINTS" id="PR00344">
    <property type="entry name" value="BCTRLSENSOR"/>
</dbReference>
<dbReference type="SMART" id="SM00387">
    <property type="entry name" value="HATPase_c"/>
    <property type="match status" value="1"/>
</dbReference>
<dbReference type="SMART" id="SM00388">
    <property type="entry name" value="HisKA"/>
    <property type="match status" value="1"/>
</dbReference>
<dbReference type="SMART" id="SM00073">
    <property type="entry name" value="HPT"/>
    <property type="match status" value="1"/>
</dbReference>
<dbReference type="SMART" id="SM00062">
    <property type="entry name" value="PBPb"/>
    <property type="match status" value="2"/>
</dbReference>
<dbReference type="SMART" id="SM00448">
    <property type="entry name" value="REC"/>
    <property type="match status" value="1"/>
</dbReference>
<dbReference type="SUPFAM" id="SSF55874">
    <property type="entry name" value="ATPase domain of HSP90 chaperone/DNA topoisomerase II/histidine kinase"/>
    <property type="match status" value="1"/>
</dbReference>
<dbReference type="SUPFAM" id="SSF52172">
    <property type="entry name" value="CheY-like"/>
    <property type="match status" value="1"/>
</dbReference>
<dbReference type="SUPFAM" id="SSF47226">
    <property type="entry name" value="Histidine-containing phosphotransfer domain, HPT domain"/>
    <property type="match status" value="1"/>
</dbReference>
<dbReference type="SUPFAM" id="SSF47384">
    <property type="entry name" value="Homodimeric domain of signal transducing histidine kinase"/>
    <property type="match status" value="1"/>
</dbReference>
<dbReference type="SUPFAM" id="SSF53850">
    <property type="entry name" value="Periplasmic binding protein-like II"/>
    <property type="match status" value="2"/>
</dbReference>
<dbReference type="PROSITE" id="PS50109">
    <property type="entry name" value="HIS_KIN"/>
    <property type="match status" value="1"/>
</dbReference>
<dbReference type="PROSITE" id="PS50894">
    <property type="entry name" value="HPT"/>
    <property type="match status" value="1"/>
</dbReference>
<dbReference type="PROSITE" id="PS50110">
    <property type="entry name" value="RESPONSE_REGULATORY"/>
    <property type="match status" value="1"/>
</dbReference>
<name>EVGS_ECOLI</name>
<sequence>MKFLPYIFLLCCGLWSTISFADEDYIEYRGISSNNRVTLDPLRLSNKELRWLASKKNLVIAVHKSQTATLLHTDSQQRVRGINADYLNLLKRALNIKLTLREYADHQKAMDALAEGEVDIVLSHLVTSPPLNNDIAATKPLIITFPALVTTLHDSMRPLTSPKPVNIARVANYPPDEVIHQSFPKATIISFTNLYQALASVSAGHNDYFIGSNIITSSMISRYFTHSLNVVKYYNSPRQYNFFLTRKESVILNEVLNRFVDALTNEVRYEVSQNWLDTGNLAFLNKPLELTEHEKQWIKQHPNLKVLENPYSPPYSMTDENGSVRGVMGDILNIITLQTGLNFSPITVSHNIHAGTQLSPGGWDIIPGAIYSEDRENNVLFAEAFITTPYVFVMQKAPDSEQTLKKGMKVAIPYYYELHSQLKEMYPEVEWIQVDNASAAFHKVKEGELDALVATQLNSRYMIDHYYPNELYHFLIPGVPNASLSFAFPRGEPELKDIINKALNAIPPSEVLRLTEKWIKMPNVTIDTWDLYSEQFYIVTTLSVLLVGSSLLWGFYLLRSVRRRKVIQGDLENQISFRKALSDSLPNPTYVVNWQGNVISHNSAFEHYFTADYYKNAMLPLENSDSPFKDVFSNAHEVTAETKENRTIYTQVFEIDNGIEKRCINHWHTLCNLPASDNAVYICGWQDITETRDLINALEVEKNKAIKATVAKSQFLATMSHEIRTPISSIMGFLELLSGSGLSKEQRVEAISLAYATGQSLLGLIGEILDVDKIESGNYQLQPQWVDIPTLVQNTCHSFGAIAASKSIALSCSSTFPEHYLVKIDPQAFKQVLSNLLSNALKFTTEGAVKITTSLGHIDDNHAVIKMTIMDSGSGLSQEEQQQLFKRYSQTSAGRQQTGSGLGLMICKELIKNMQGDLSLESHPGIGTTFTITIPVEISQQVATVEAKAEQPITLPEKLSILIADDHPTNRLLLKRQLNLLGYDVDEATDGVQALHKVSMQHYDLLITDVNMPNMDGFELTRKLREQNSSLPIWGLTANAQANEREKGLSCGMNLCLFKPLTLDVLKTHLSQLHQVAHIAPQYRHLDIEALKNNTANDLQLMQEILMTFQHETHKDLPAAFQALEAGDNRTFHQCIHRIHGAANILNLQKLINISHQLEITPVSDDSKPEILQLLNSVKEHIAELDQEIAVFCQKND</sequence>